<proteinExistence type="inferred from homology"/>
<protein>
    <recommendedName>
        <fullName evidence="1">Lipid-A-disaccharide synthase</fullName>
        <ecNumber evidence="1">2.4.1.182</ecNumber>
    </recommendedName>
</protein>
<sequence length="385" mass="43694">MAKIYFIAGEMSGDFIGGRIIQHLKNNTGVQFVGVGSKYMEEAGSFKSLFPISAINLIGFVEILPHILKLKKLIDKTVEDIINSKADLLITIDSPGFTYRVAKQVRKLLPKLKMIHIVAPSVWAYKEGRAIKYAKIYDCLFAVLPFESPYFTKVGLDCRYIGHPIMEQEFYSDKIALRKEFKIDENEKVLCVTLGSRRGEILRHLPVFIASIEEIFESCKNLKVIFTLVNPANEVIIKPFLENVKFNYLFSSERLKTYALSDLALAKSGTNTLEIAASGTPMIVAYKVNILSFLIIRALIKIKYVTLINIIAGSEIIPEFIQHNCRATLISNKLQELLFSSKKAYKQVIESQKILQKLRFKSNQLPSYIAAEIIKQEFLEPKIKL</sequence>
<reference key="1">
    <citation type="submission" date="2007-09" db="EMBL/GenBank/DDBJ databases">
        <title>Complete genome sequence of Rickettsia canadensis.</title>
        <authorList>
            <person name="Madan A."/>
            <person name="Fahey J."/>
            <person name="Helton E."/>
            <person name="Ketteman M."/>
            <person name="Madan A."/>
            <person name="Rodrigues S."/>
            <person name="Sanchez A."/>
            <person name="Whiting M."/>
            <person name="Dasch G."/>
            <person name="Eremeeva M."/>
        </authorList>
    </citation>
    <scope>NUCLEOTIDE SEQUENCE [LARGE SCALE GENOMIC DNA]</scope>
    <source>
        <strain>McKiel</strain>
    </source>
</reference>
<organism>
    <name type="scientific">Rickettsia canadensis (strain McKiel)</name>
    <dbReference type="NCBI Taxonomy" id="293613"/>
    <lineage>
        <taxon>Bacteria</taxon>
        <taxon>Pseudomonadati</taxon>
        <taxon>Pseudomonadota</taxon>
        <taxon>Alphaproteobacteria</taxon>
        <taxon>Rickettsiales</taxon>
        <taxon>Rickettsiaceae</taxon>
        <taxon>Rickettsieae</taxon>
        <taxon>Rickettsia</taxon>
        <taxon>belli group</taxon>
    </lineage>
</organism>
<keyword id="KW-0328">Glycosyltransferase</keyword>
<keyword id="KW-0441">Lipid A biosynthesis</keyword>
<keyword id="KW-0444">Lipid biosynthesis</keyword>
<keyword id="KW-0443">Lipid metabolism</keyword>
<keyword id="KW-0808">Transferase</keyword>
<comment type="function">
    <text evidence="1">Condensation of UDP-2,3-diacylglucosamine and 2,3-diacylglucosamine-1-phosphate to form lipid A disaccharide, a precursor of lipid A, a phosphorylated glycolipid that anchors the lipopolysaccharide to the outer membrane of the cell.</text>
</comment>
<comment type="catalytic activity">
    <reaction evidence="1">
        <text>a lipid X + a UDP-2-N,3-O-bis[(3R)-3-hydroxyacyl]-alpha-D-glucosamine = a lipid A disaccharide + UDP + H(+)</text>
        <dbReference type="Rhea" id="RHEA:67828"/>
        <dbReference type="ChEBI" id="CHEBI:15378"/>
        <dbReference type="ChEBI" id="CHEBI:58223"/>
        <dbReference type="ChEBI" id="CHEBI:137748"/>
        <dbReference type="ChEBI" id="CHEBI:176338"/>
        <dbReference type="ChEBI" id="CHEBI:176343"/>
        <dbReference type="EC" id="2.4.1.182"/>
    </reaction>
</comment>
<comment type="pathway">
    <text evidence="1">Bacterial outer membrane biogenesis; LPS lipid A biosynthesis.</text>
</comment>
<comment type="similarity">
    <text evidence="1">Belongs to the LpxB family.</text>
</comment>
<name>LPXB_RICCK</name>
<evidence type="ECO:0000255" key="1">
    <source>
        <dbReference type="HAMAP-Rule" id="MF_00392"/>
    </source>
</evidence>
<feature type="chain" id="PRO_1000049413" description="Lipid-A-disaccharide synthase">
    <location>
        <begin position="1"/>
        <end position="385"/>
    </location>
</feature>
<accession>A8EZC6</accession>
<gene>
    <name evidence="1" type="primary">lpxB</name>
    <name type="ordered locus">A1E_03910</name>
</gene>
<dbReference type="EC" id="2.4.1.182" evidence="1"/>
<dbReference type="EMBL" id="CP000409">
    <property type="protein sequence ID" value="ABV73709.1"/>
    <property type="molecule type" value="Genomic_DNA"/>
</dbReference>
<dbReference type="RefSeq" id="WP_012148904.1">
    <property type="nucleotide sequence ID" value="NC_009879.1"/>
</dbReference>
<dbReference type="SMR" id="A8EZC6"/>
<dbReference type="STRING" id="293613.A1E_03910"/>
<dbReference type="CAZy" id="GT19">
    <property type="family name" value="Glycosyltransferase Family 19"/>
</dbReference>
<dbReference type="KEGG" id="rcm:A1E_03910"/>
<dbReference type="eggNOG" id="COG0763">
    <property type="taxonomic scope" value="Bacteria"/>
</dbReference>
<dbReference type="HOGENOM" id="CLU_036577_2_0_5"/>
<dbReference type="UniPathway" id="UPA00973"/>
<dbReference type="Proteomes" id="UP000007056">
    <property type="component" value="Chromosome"/>
</dbReference>
<dbReference type="GO" id="GO:0016020">
    <property type="term" value="C:membrane"/>
    <property type="evidence" value="ECO:0007669"/>
    <property type="project" value="GOC"/>
</dbReference>
<dbReference type="GO" id="GO:0008915">
    <property type="term" value="F:lipid-A-disaccharide synthase activity"/>
    <property type="evidence" value="ECO:0007669"/>
    <property type="project" value="UniProtKB-UniRule"/>
</dbReference>
<dbReference type="GO" id="GO:0005543">
    <property type="term" value="F:phospholipid binding"/>
    <property type="evidence" value="ECO:0007669"/>
    <property type="project" value="TreeGrafter"/>
</dbReference>
<dbReference type="GO" id="GO:0009245">
    <property type="term" value="P:lipid A biosynthetic process"/>
    <property type="evidence" value="ECO:0007669"/>
    <property type="project" value="UniProtKB-UniRule"/>
</dbReference>
<dbReference type="HAMAP" id="MF_00392">
    <property type="entry name" value="LpxB"/>
    <property type="match status" value="1"/>
</dbReference>
<dbReference type="InterPro" id="IPR003835">
    <property type="entry name" value="Glyco_trans_19"/>
</dbReference>
<dbReference type="NCBIfam" id="TIGR00215">
    <property type="entry name" value="lpxB"/>
    <property type="match status" value="1"/>
</dbReference>
<dbReference type="PANTHER" id="PTHR30372">
    <property type="entry name" value="LIPID-A-DISACCHARIDE SYNTHASE"/>
    <property type="match status" value="1"/>
</dbReference>
<dbReference type="PANTHER" id="PTHR30372:SF4">
    <property type="entry name" value="LIPID-A-DISACCHARIDE SYNTHASE, MITOCHONDRIAL-RELATED"/>
    <property type="match status" value="1"/>
</dbReference>
<dbReference type="Pfam" id="PF02684">
    <property type="entry name" value="LpxB"/>
    <property type="match status" value="1"/>
</dbReference>
<dbReference type="SUPFAM" id="SSF53756">
    <property type="entry name" value="UDP-Glycosyltransferase/glycogen phosphorylase"/>
    <property type="match status" value="1"/>
</dbReference>